<proteinExistence type="evidence at protein level"/>
<protein>
    <recommendedName>
        <fullName evidence="4 8">A-kinase anchor protein 7 isoform gamma</fullName>
        <shortName evidence="4">AKAP-7 isoform gamma</shortName>
    </recommendedName>
    <alternativeName>
        <fullName evidence="2">A-kinase anchor protein 18</fullName>
        <shortName evidence="2">AKAP-18</shortName>
    </alternativeName>
    <alternativeName>
        <fullName evidence="4">Protein kinase A-anchoring protein 7 isoform gamma</fullName>
        <shortName evidence="4">PRKA7 isoform gamma</shortName>
    </alternativeName>
</protein>
<dbReference type="EMBL" id="AY301068">
    <property type="protein sequence ID" value="AAP55205.1"/>
    <property type="molecule type" value="mRNA"/>
</dbReference>
<dbReference type="EMBL" id="AC153549">
    <property type="status" value="NOT_ANNOTATED_CDS"/>
    <property type="molecule type" value="Genomic_DNA"/>
</dbReference>
<dbReference type="EMBL" id="AC153550">
    <property type="status" value="NOT_ANNOTATED_CDS"/>
    <property type="molecule type" value="Genomic_DNA"/>
</dbReference>
<dbReference type="CCDS" id="CCDS23753.1">
    <molecule id="Q7TN79-1"/>
</dbReference>
<dbReference type="RefSeq" id="NP_001366167.1">
    <molecule id="Q7TN79-1"/>
    <property type="nucleotide sequence ID" value="NM_001379238.1"/>
</dbReference>
<dbReference type="RefSeq" id="NP_061217.3">
    <molecule id="Q7TN79-1"/>
    <property type="nucleotide sequence ID" value="NM_018747.5"/>
</dbReference>
<dbReference type="RefSeq" id="XP_030101017.1">
    <molecule id="Q7TN79-1"/>
    <property type="nucleotide sequence ID" value="XM_030245157.2"/>
</dbReference>
<dbReference type="SMR" id="Q7TN79"/>
<dbReference type="BioGRID" id="240608">
    <property type="interactions" value="2"/>
</dbReference>
<dbReference type="FunCoup" id="Q7TN79">
    <property type="interactions" value="777"/>
</dbReference>
<dbReference type="STRING" id="10090.ENSMUSP00000043624"/>
<dbReference type="BindingDB" id="Q7TN79"/>
<dbReference type="GlyGen" id="Q7TN79">
    <property type="glycosylation" value="2 sites, 1 N-linked glycan (1 site), 1 O-linked glycan (1 site)"/>
</dbReference>
<dbReference type="iPTMnet" id="Q7TN79"/>
<dbReference type="PaxDb" id="10090-ENSMUSP00000043624"/>
<dbReference type="PeptideAtlas" id="Q7TN79"/>
<dbReference type="ProteomicsDB" id="296010">
    <molecule id="Q7TN79-1"/>
</dbReference>
<dbReference type="Pumba" id="Q7TN79"/>
<dbReference type="Antibodypedia" id="19674">
    <property type="antibodies" value="297 antibodies from 28 providers"/>
</dbReference>
<dbReference type="DNASU" id="432442"/>
<dbReference type="Ensembl" id="ENSMUST00000041984.14">
    <molecule id="Q7TN79-1"/>
    <property type="protein sequence ID" value="ENSMUSP00000043624.8"/>
    <property type="gene ID" value="ENSMUSG00000039166.17"/>
</dbReference>
<dbReference type="GeneID" id="432442"/>
<dbReference type="UCSC" id="uc007eri.1">
    <molecule id="Q7TN79-1"/>
    <property type="organism name" value="mouse"/>
</dbReference>
<dbReference type="AGR" id="MGI:1859150"/>
<dbReference type="CTD" id="9465"/>
<dbReference type="MGI" id="MGI:1859150">
    <property type="gene designation" value="Akap7"/>
</dbReference>
<dbReference type="VEuPathDB" id="HostDB:ENSMUSG00000039166"/>
<dbReference type="eggNOG" id="KOG2814">
    <property type="taxonomic scope" value="Eukaryota"/>
</dbReference>
<dbReference type="GeneTree" id="ENSGT00390000012756"/>
<dbReference type="HOGENOM" id="CLU_052186_0_0_1"/>
<dbReference type="InParanoid" id="Q7TN79"/>
<dbReference type="OMA" id="HCESSII"/>
<dbReference type="PhylomeDB" id="Q7TN79"/>
<dbReference type="TreeFam" id="TF105406"/>
<dbReference type="BioGRID-ORCS" id="432442">
    <property type="hits" value="3 hits in 77 CRISPR screens"/>
</dbReference>
<dbReference type="ChiTaRS" id="Akap7">
    <property type="organism name" value="mouse"/>
</dbReference>
<dbReference type="Proteomes" id="UP000000589">
    <property type="component" value="Chromosome 10"/>
</dbReference>
<dbReference type="RNAct" id="Q7TN79">
    <property type="molecule type" value="protein"/>
</dbReference>
<dbReference type="Bgee" id="ENSMUSG00000039166">
    <property type="expression patterns" value="Expressed in animal zygote and 227 other cell types or tissues"/>
</dbReference>
<dbReference type="ExpressionAtlas" id="Q7TN79">
    <property type="expression patterns" value="baseline and differential"/>
</dbReference>
<dbReference type="GO" id="GO:0005737">
    <property type="term" value="C:cytoplasm"/>
    <property type="evidence" value="ECO:0000314"/>
    <property type="project" value="UniProtKB"/>
</dbReference>
<dbReference type="GO" id="GO:0005829">
    <property type="term" value="C:cytosol"/>
    <property type="evidence" value="ECO:0007669"/>
    <property type="project" value="Ensembl"/>
</dbReference>
<dbReference type="GO" id="GO:0098686">
    <property type="term" value="C:hippocampal mossy fiber to CA3 synapse"/>
    <property type="evidence" value="ECO:0000314"/>
    <property type="project" value="SynGO"/>
</dbReference>
<dbReference type="GO" id="GO:0005634">
    <property type="term" value="C:nucleus"/>
    <property type="evidence" value="ECO:0000314"/>
    <property type="project" value="UniProtKB"/>
</dbReference>
<dbReference type="GO" id="GO:0032991">
    <property type="term" value="C:protein-containing complex"/>
    <property type="evidence" value="ECO:0007669"/>
    <property type="project" value="Ensembl"/>
</dbReference>
<dbReference type="GO" id="GO:0000166">
    <property type="term" value="F:nucleotide binding"/>
    <property type="evidence" value="ECO:0007669"/>
    <property type="project" value="UniProtKB-KW"/>
</dbReference>
<dbReference type="GO" id="GO:0034237">
    <property type="term" value="F:protein kinase A regulatory subunit binding"/>
    <property type="evidence" value="ECO:0000314"/>
    <property type="project" value="UniProtKB"/>
</dbReference>
<dbReference type="GO" id="GO:0019901">
    <property type="term" value="F:protein kinase binding"/>
    <property type="evidence" value="ECO:0000314"/>
    <property type="project" value="MGI"/>
</dbReference>
<dbReference type="GO" id="GO:0007178">
    <property type="term" value="P:cell surface receptor protein serine/threonine kinase signaling pathway"/>
    <property type="evidence" value="ECO:0000266"/>
    <property type="project" value="MGI"/>
</dbReference>
<dbReference type="GO" id="GO:0050804">
    <property type="term" value="P:modulation of chemical synaptic transmission"/>
    <property type="evidence" value="ECO:0000314"/>
    <property type="project" value="SynGO"/>
</dbReference>
<dbReference type="GO" id="GO:0008104">
    <property type="term" value="P:protein localization"/>
    <property type="evidence" value="ECO:0000266"/>
    <property type="project" value="MGI"/>
</dbReference>
<dbReference type="FunFam" id="3.90.1140.10:FF:000004">
    <property type="entry name" value="A-kinase anchoring protein 7 isoform X1"/>
    <property type="match status" value="1"/>
</dbReference>
<dbReference type="Gene3D" id="3.90.1140.10">
    <property type="entry name" value="Cyclic phosphodiesterase"/>
    <property type="match status" value="1"/>
</dbReference>
<dbReference type="InterPro" id="IPR019510">
    <property type="entry name" value="AKAP7-like_phosphoesterase"/>
</dbReference>
<dbReference type="InterPro" id="IPR052641">
    <property type="entry name" value="AKAP7_isoform_gamma"/>
</dbReference>
<dbReference type="InterPro" id="IPR019511">
    <property type="entry name" value="AKAP7_RI-RII-bd_dom"/>
</dbReference>
<dbReference type="InterPro" id="IPR009097">
    <property type="entry name" value="Cyclic_Pdiesterase"/>
</dbReference>
<dbReference type="PANTHER" id="PTHR15934:SF6">
    <property type="entry name" value="A-KINASE ANCHOR PROTEIN 7 ISOFORM GAMMA"/>
    <property type="match status" value="1"/>
</dbReference>
<dbReference type="PANTHER" id="PTHR15934">
    <property type="entry name" value="RNA 2',3'-CYCLIC PHOSPHODIESTERASE"/>
    <property type="match status" value="1"/>
</dbReference>
<dbReference type="Pfam" id="PF10469">
    <property type="entry name" value="AKAP7_NLS"/>
    <property type="match status" value="1"/>
</dbReference>
<dbReference type="Pfam" id="PF10470">
    <property type="entry name" value="AKAP7_RIRII_bdg"/>
    <property type="match status" value="1"/>
</dbReference>
<dbReference type="SUPFAM" id="SSF55144">
    <property type="entry name" value="LigT-like"/>
    <property type="match status" value="1"/>
</dbReference>
<comment type="function">
    <text evidence="4 7">Probably targets cAMP-dependent protein kinase (PKA) to the cellular membrane or cytoskeletal structures. The membrane-associated form reduces epithelial sodium channel (ENaC) activity, whereas the free cytoplasmic form may negatively regulate ENaC channel feedback inhibition by intracellular sodium (By similarity).</text>
</comment>
<comment type="subunit">
    <text evidence="4 6">Binds cAMP-dependent protein kinase (PKA). Interacts with PRKCA; only the cytoplasmic form is capable of interacting with PRKCA (By similarity).</text>
</comment>
<comment type="subcellular location">
    <subcellularLocation>
        <location evidence="6">Nucleus</location>
    </subcellularLocation>
    <subcellularLocation>
        <location evidence="6">Cytoplasm</location>
    </subcellularLocation>
    <text evidence="6">In oocytes, localizes to the nucleus, to germinal vesicles and throughout the cytoplasm.</text>
</comment>
<comment type="alternative products">
    <event type="alternative splicing"/>
    <isoform>
        <id>Q7TN79-1</id>
        <name evidence="6">Gamma</name>
        <sequence type="displayed"/>
    </isoform>
    <isoform>
        <id>O55074-1</id>
        <name evidence="7">Alpha</name>
        <sequence type="external"/>
    </isoform>
</comment>
<comment type="tissue specificity">
    <text evidence="6">Expressed in oocytes.</text>
</comment>
<organism>
    <name type="scientific">Mus musculus</name>
    <name type="common">Mouse</name>
    <dbReference type="NCBI Taxonomy" id="10090"/>
    <lineage>
        <taxon>Eukaryota</taxon>
        <taxon>Metazoa</taxon>
        <taxon>Chordata</taxon>
        <taxon>Craniata</taxon>
        <taxon>Vertebrata</taxon>
        <taxon>Euteleostomi</taxon>
        <taxon>Mammalia</taxon>
        <taxon>Eutheria</taxon>
        <taxon>Euarchontoglires</taxon>
        <taxon>Glires</taxon>
        <taxon>Rodentia</taxon>
        <taxon>Myomorpha</taxon>
        <taxon>Muroidea</taxon>
        <taxon>Muridae</taxon>
        <taxon>Murinae</taxon>
        <taxon>Mus</taxon>
        <taxon>Mus</taxon>
    </lineage>
</organism>
<accession>Q7TN79</accession>
<accession>F8VQ58</accession>
<name>AKA7G_MOUSE</name>
<sequence length="314" mass="35482">MPFAAVDIQDDCGSPDVPQANPKRSKEEEEDRGDKNDHVKKRKKAKKDYQPNYFLSIPITNKKITTGIKVLQNSILQQDKRLTKAMVGDGSFHITLLVMQLLNEDEVNIGTDALLELKPFVEEILEGKHLALPFQGIGTFQGQVGFVKLADGDHVSALLEIAETAKRTFREKGILAGESRTFKPHLTFMKLSKAPMLRKKGVRKIEPGLYEQFIDHRFGEELLYQIDLCSMLKKKQSNGYYHCESSIVIGEKDRREPEDAELVRLSKRLVENAVLKAVQQYLEETQNKKQPGEGNSTKAEEGDRNGDGSDNNRK</sequence>
<evidence type="ECO:0000250" key="1">
    <source>
        <dbReference type="UniProtKB" id="O43687"/>
    </source>
</evidence>
<evidence type="ECO:0000250" key="2">
    <source>
        <dbReference type="UniProtKB" id="O55074"/>
    </source>
</evidence>
<evidence type="ECO:0000250" key="3">
    <source>
        <dbReference type="UniProtKB" id="Q6JP77"/>
    </source>
</evidence>
<evidence type="ECO:0000250" key="4">
    <source>
        <dbReference type="UniProtKB" id="Q9P0M2"/>
    </source>
</evidence>
<evidence type="ECO:0000256" key="5">
    <source>
        <dbReference type="SAM" id="MobiDB-lite"/>
    </source>
</evidence>
<evidence type="ECO:0000269" key="6">
    <source>
    </source>
</evidence>
<evidence type="ECO:0000305" key="7"/>
<evidence type="ECO:0000312" key="8">
    <source>
        <dbReference type="EMBL" id="AAP55205.1"/>
    </source>
</evidence>
<evidence type="ECO:0000312" key="9">
    <source>
        <dbReference type="MGI" id="MGI:1859150"/>
    </source>
</evidence>
<gene>
    <name evidence="9" type="primary">Akap7</name>
    <name evidence="4" type="synonym">Akap18</name>
</gene>
<feature type="chain" id="PRO_0000419634" description="A-kinase anchor protein 7 isoform gamma">
    <location>
        <begin position="1"/>
        <end position="314"/>
    </location>
</feature>
<feature type="region of interest" description="Disordered" evidence="5">
    <location>
        <begin position="1"/>
        <end position="46"/>
    </location>
</feature>
<feature type="region of interest" description="PKA-RII-alpha subunit binding domain" evidence="3">
    <location>
        <begin position="260"/>
        <end position="314"/>
    </location>
</feature>
<feature type="region of interest" description="RI-alpha-binding" evidence="6">
    <location>
        <begin position="261"/>
        <end position="285"/>
    </location>
</feature>
<feature type="region of interest" description="RII-binding" evidence="1">
    <location>
        <begin position="262"/>
        <end position="275"/>
    </location>
</feature>
<feature type="region of interest" description="Disordered" evidence="5">
    <location>
        <begin position="281"/>
        <end position="314"/>
    </location>
</feature>
<feature type="compositionally biased region" description="Basic and acidic residues" evidence="5">
    <location>
        <begin position="24"/>
        <end position="37"/>
    </location>
</feature>
<feature type="compositionally biased region" description="Basic and acidic residues" evidence="5">
    <location>
        <begin position="298"/>
        <end position="314"/>
    </location>
</feature>
<feature type="binding site" evidence="3">
    <location>
        <position position="95"/>
    </location>
    <ligand>
        <name>AMP</name>
        <dbReference type="ChEBI" id="CHEBI:456215"/>
    </ligand>
</feature>
<feature type="binding site" evidence="3">
    <location>
        <position position="95"/>
    </location>
    <ligand>
        <name>CMP</name>
        <dbReference type="ChEBI" id="CHEBI:60377"/>
    </ligand>
</feature>
<feature type="binding site" evidence="3">
    <location>
        <begin position="185"/>
        <end position="187"/>
    </location>
    <ligand>
        <name>AMP</name>
        <dbReference type="ChEBI" id="CHEBI:456215"/>
    </ligand>
</feature>
<feature type="binding site" evidence="3">
    <location>
        <begin position="185"/>
        <end position="187"/>
    </location>
    <ligand>
        <name>CMP</name>
        <dbReference type="ChEBI" id="CHEBI:60377"/>
    </ligand>
</feature>
<feature type="mutagenesis site" description="Abolishes nuclear localization; when associated with E-43." evidence="6">
    <original>K</original>
    <variation>E</variation>
    <location>
        <position position="41"/>
    </location>
</feature>
<feature type="mutagenesis site" description="Abolishes nuclear localization; when associated with E-41." evidence="6">
    <original>K</original>
    <variation>E</variation>
    <location>
        <position position="43"/>
    </location>
</feature>
<feature type="mutagenesis site" description="Abolishes PKA-RI-alpha binding; when associated with P-269." evidence="6">
    <original>L</original>
    <variation>P</variation>
    <location>
        <position position="265"/>
    </location>
</feature>
<feature type="mutagenesis site" description="Abolishes PKA-RI-alpha binding; when associated with P-265." evidence="6">
    <original>L</original>
    <variation>P</variation>
    <location>
        <position position="269"/>
    </location>
</feature>
<feature type="sequence conflict" description="In Ref. 1; AAP55205." evidence="7" ref="1">
    <original>V</original>
    <variation>S</variation>
    <location>
        <position position="70"/>
    </location>
</feature>
<feature type="sequence conflict" description="In Ref. 1; AAP55205." evidence="7" ref="1">
    <original>V</original>
    <variation>A</variation>
    <location>
        <position position="278"/>
    </location>
</feature>
<keyword id="KW-0025">Alternative splicing</keyword>
<keyword id="KW-0963">Cytoplasm</keyword>
<keyword id="KW-0547">Nucleotide-binding</keyword>
<keyword id="KW-0539">Nucleus</keyword>
<keyword id="KW-1185">Reference proteome</keyword>
<reference evidence="7 8" key="1">
    <citation type="journal article" date="2003" name="Biochem. Biophys. Res. Commun.">
        <title>AKAP7gamma is a nuclear RI-binding AKAP.</title>
        <authorList>
            <person name="Brown R.L."/>
            <person name="August S.L."/>
            <person name="Williams C.J."/>
            <person name="Moss S.B."/>
        </authorList>
    </citation>
    <scope>NUCLEOTIDE SEQUENCE [MRNA]</scope>
    <scope>RI-ALPHA-BINDING</scope>
    <scope>SUBCELLULAR LOCATION</scope>
    <scope>TISSUE SPECIFICITY</scope>
    <scope>MUTAGENESIS OF LYS-41; LYS-43; LEU-265 AND LEU-269</scope>
    <source>
        <strain evidence="8">C57BL/6J x SJL/J</strain>
        <tissue evidence="6">Oocyte</tissue>
    </source>
</reference>
<reference key="2">
    <citation type="journal article" date="2009" name="PLoS Biol.">
        <title>Lineage-specific biology revealed by a finished genome assembly of the mouse.</title>
        <authorList>
            <person name="Church D.M."/>
            <person name="Goodstadt L."/>
            <person name="Hillier L.W."/>
            <person name="Zody M.C."/>
            <person name="Goldstein S."/>
            <person name="She X."/>
            <person name="Bult C.J."/>
            <person name="Agarwala R."/>
            <person name="Cherry J.L."/>
            <person name="DiCuccio M."/>
            <person name="Hlavina W."/>
            <person name="Kapustin Y."/>
            <person name="Meric P."/>
            <person name="Maglott D."/>
            <person name="Birtle Z."/>
            <person name="Marques A.C."/>
            <person name="Graves T."/>
            <person name="Zhou S."/>
            <person name="Teague B."/>
            <person name="Potamousis K."/>
            <person name="Churas C."/>
            <person name="Place M."/>
            <person name="Herschleb J."/>
            <person name="Runnheim R."/>
            <person name="Forrest D."/>
            <person name="Amos-Landgraf J."/>
            <person name="Schwartz D.C."/>
            <person name="Cheng Z."/>
            <person name="Lindblad-Toh K."/>
            <person name="Eichler E.E."/>
            <person name="Ponting C.P."/>
        </authorList>
    </citation>
    <scope>NUCLEOTIDE SEQUENCE [LARGE SCALE GENOMIC DNA]</scope>
    <source>
        <strain>C57BL/6J</strain>
    </source>
</reference>
<reference key="3">
    <citation type="journal article" date="2010" name="Cell">
        <title>A tissue-specific atlas of mouse protein phosphorylation and expression.</title>
        <authorList>
            <person name="Huttlin E.L."/>
            <person name="Jedrychowski M.P."/>
            <person name="Elias J.E."/>
            <person name="Goswami T."/>
            <person name="Rad R."/>
            <person name="Beausoleil S.A."/>
            <person name="Villen J."/>
            <person name="Haas W."/>
            <person name="Sowa M.E."/>
            <person name="Gygi S.P."/>
        </authorList>
    </citation>
    <scope>IDENTIFICATION BY MASS SPECTROMETRY [LARGE SCALE ANALYSIS]</scope>
    <source>
        <tissue>Brain</tissue>
    </source>
</reference>